<proteinExistence type="inferred from homology"/>
<sequence>MADKSVKKVVLAYSGGLDTSIILKWLQTEYGAEVITFTADLGQGEEIEPARAKALAAGVKPENIFIEDVREEFVRDYVFPMFRANTVYEGQYLLGTSIARPLIAKKQIEIARKMGADAVSHGATGKGNDQVRFELGYYGLEPDITVIAPWREWDFKSREALLDFAEKHQIQITKDKRGEAPFSVDANLLHSSSEGKVLEDPAVEAPEFVHMRTIAPEDAPDAPTIITIDFEKGDPVAIDGVAMSPATLLTKLNELGRDNGVGRLDLVENRFVGMKSRGVYETPGGTILLAAHRGIESITLDRGAMHLKDELMPKYASLVYNGFWFSPEREMLQAAIDYSQDKVTGRVRVKLYKGNVTVIGRESPYSLYDQDLVTFEEGKVAYDHRDAGGFIKLNALRLRVLAKRDKRG</sequence>
<name>ASSY_CAUVC</name>
<reference key="1">
    <citation type="journal article" date="2001" name="Proc. Natl. Acad. Sci. U.S.A.">
        <title>Complete genome sequence of Caulobacter crescentus.</title>
        <authorList>
            <person name="Nierman W.C."/>
            <person name="Feldblyum T.V."/>
            <person name="Laub M.T."/>
            <person name="Paulsen I.T."/>
            <person name="Nelson K.E."/>
            <person name="Eisen J.A."/>
            <person name="Heidelberg J.F."/>
            <person name="Alley M.R.K."/>
            <person name="Ohta N."/>
            <person name="Maddock J.R."/>
            <person name="Potocka I."/>
            <person name="Nelson W.C."/>
            <person name="Newton A."/>
            <person name="Stephens C."/>
            <person name="Phadke N.D."/>
            <person name="Ely B."/>
            <person name="DeBoy R.T."/>
            <person name="Dodson R.J."/>
            <person name="Durkin A.S."/>
            <person name="Gwinn M.L."/>
            <person name="Haft D.H."/>
            <person name="Kolonay J.F."/>
            <person name="Smit J."/>
            <person name="Craven M.B."/>
            <person name="Khouri H.M."/>
            <person name="Shetty J."/>
            <person name="Berry K.J."/>
            <person name="Utterback T.R."/>
            <person name="Tran K."/>
            <person name="Wolf A.M."/>
            <person name="Vamathevan J.J."/>
            <person name="Ermolaeva M.D."/>
            <person name="White O."/>
            <person name="Salzberg S.L."/>
            <person name="Venter J.C."/>
            <person name="Shapiro L."/>
            <person name="Fraser C.M."/>
        </authorList>
    </citation>
    <scope>NUCLEOTIDE SEQUENCE [LARGE SCALE GENOMIC DNA]</scope>
    <source>
        <strain>ATCC 19089 / CIP 103742 / CB 15</strain>
    </source>
</reference>
<comment type="catalytic activity">
    <reaction evidence="1">
        <text>L-citrulline + L-aspartate + ATP = 2-(N(omega)-L-arginino)succinate + AMP + diphosphate + H(+)</text>
        <dbReference type="Rhea" id="RHEA:10932"/>
        <dbReference type="ChEBI" id="CHEBI:15378"/>
        <dbReference type="ChEBI" id="CHEBI:29991"/>
        <dbReference type="ChEBI" id="CHEBI:30616"/>
        <dbReference type="ChEBI" id="CHEBI:33019"/>
        <dbReference type="ChEBI" id="CHEBI:57472"/>
        <dbReference type="ChEBI" id="CHEBI:57743"/>
        <dbReference type="ChEBI" id="CHEBI:456215"/>
        <dbReference type="EC" id="6.3.4.5"/>
    </reaction>
</comment>
<comment type="pathway">
    <text evidence="1">Amino-acid biosynthesis; L-arginine biosynthesis; L-arginine from L-ornithine and carbamoyl phosphate: step 2/3.</text>
</comment>
<comment type="subunit">
    <text evidence="1">Homotetramer.</text>
</comment>
<comment type="subcellular location">
    <subcellularLocation>
        <location evidence="1">Cytoplasm</location>
    </subcellularLocation>
</comment>
<comment type="similarity">
    <text evidence="1">Belongs to the argininosuccinate synthase family. Type 1 subfamily.</text>
</comment>
<feature type="chain" id="PRO_0000148582" description="Argininosuccinate synthase">
    <location>
        <begin position="1"/>
        <end position="408"/>
    </location>
</feature>
<feature type="binding site" evidence="1">
    <location>
        <begin position="12"/>
        <end position="20"/>
    </location>
    <ligand>
        <name>ATP</name>
        <dbReference type="ChEBI" id="CHEBI:30616"/>
    </ligand>
</feature>
<feature type="binding site" evidence="1">
    <location>
        <position position="39"/>
    </location>
    <ligand>
        <name>ATP</name>
        <dbReference type="ChEBI" id="CHEBI:30616"/>
    </ligand>
</feature>
<feature type="binding site" evidence="1">
    <location>
        <position position="92"/>
    </location>
    <ligand>
        <name>L-citrulline</name>
        <dbReference type="ChEBI" id="CHEBI:57743"/>
    </ligand>
</feature>
<feature type="binding site" evidence="1">
    <location>
        <position position="97"/>
    </location>
    <ligand>
        <name>L-citrulline</name>
        <dbReference type="ChEBI" id="CHEBI:57743"/>
    </ligand>
</feature>
<feature type="binding site" evidence="1">
    <location>
        <position position="122"/>
    </location>
    <ligand>
        <name>ATP</name>
        <dbReference type="ChEBI" id="CHEBI:30616"/>
    </ligand>
</feature>
<feature type="binding site" evidence="1">
    <location>
        <position position="124"/>
    </location>
    <ligand>
        <name>L-aspartate</name>
        <dbReference type="ChEBI" id="CHEBI:29991"/>
    </ligand>
</feature>
<feature type="binding site" evidence="1">
    <location>
        <position position="128"/>
    </location>
    <ligand>
        <name>L-aspartate</name>
        <dbReference type="ChEBI" id="CHEBI:29991"/>
    </ligand>
</feature>
<feature type="binding site" evidence="1">
    <location>
        <position position="128"/>
    </location>
    <ligand>
        <name>L-citrulline</name>
        <dbReference type="ChEBI" id="CHEBI:57743"/>
    </ligand>
</feature>
<feature type="binding site" evidence="1">
    <location>
        <position position="129"/>
    </location>
    <ligand>
        <name>L-aspartate</name>
        <dbReference type="ChEBI" id="CHEBI:29991"/>
    </ligand>
</feature>
<feature type="binding site" evidence="1">
    <location>
        <position position="132"/>
    </location>
    <ligand>
        <name>L-citrulline</name>
        <dbReference type="ChEBI" id="CHEBI:57743"/>
    </ligand>
</feature>
<feature type="binding site" evidence="1">
    <location>
        <position position="183"/>
    </location>
    <ligand>
        <name>L-citrulline</name>
        <dbReference type="ChEBI" id="CHEBI:57743"/>
    </ligand>
</feature>
<feature type="binding site" evidence="1">
    <location>
        <position position="192"/>
    </location>
    <ligand>
        <name>L-citrulline</name>
        <dbReference type="ChEBI" id="CHEBI:57743"/>
    </ligand>
</feature>
<feature type="binding site" evidence="1">
    <location>
        <position position="268"/>
    </location>
    <ligand>
        <name>L-citrulline</name>
        <dbReference type="ChEBI" id="CHEBI:57743"/>
    </ligand>
</feature>
<feature type="binding site" evidence="1">
    <location>
        <position position="280"/>
    </location>
    <ligand>
        <name>L-citrulline</name>
        <dbReference type="ChEBI" id="CHEBI:57743"/>
    </ligand>
</feature>
<accession>Q9ABU1</accession>
<gene>
    <name evidence="1" type="primary">argG</name>
    <name type="ordered locus">CC_0129</name>
</gene>
<evidence type="ECO:0000255" key="1">
    <source>
        <dbReference type="HAMAP-Rule" id="MF_00005"/>
    </source>
</evidence>
<organism>
    <name type="scientific">Caulobacter vibrioides (strain ATCC 19089 / CIP 103742 / CB 15)</name>
    <name type="common">Caulobacter crescentus</name>
    <dbReference type="NCBI Taxonomy" id="190650"/>
    <lineage>
        <taxon>Bacteria</taxon>
        <taxon>Pseudomonadati</taxon>
        <taxon>Pseudomonadota</taxon>
        <taxon>Alphaproteobacteria</taxon>
        <taxon>Caulobacterales</taxon>
        <taxon>Caulobacteraceae</taxon>
        <taxon>Caulobacter</taxon>
    </lineage>
</organism>
<keyword id="KW-0028">Amino-acid biosynthesis</keyword>
<keyword id="KW-0055">Arginine biosynthesis</keyword>
<keyword id="KW-0067">ATP-binding</keyword>
<keyword id="KW-0963">Cytoplasm</keyword>
<keyword id="KW-0436">Ligase</keyword>
<keyword id="KW-0547">Nucleotide-binding</keyword>
<keyword id="KW-1185">Reference proteome</keyword>
<protein>
    <recommendedName>
        <fullName evidence="1">Argininosuccinate synthase</fullName>
        <ecNumber evidence="1">6.3.4.5</ecNumber>
    </recommendedName>
    <alternativeName>
        <fullName evidence="1">Citrulline--aspartate ligase</fullName>
    </alternativeName>
</protein>
<dbReference type="EC" id="6.3.4.5" evidence="1"/>
<dbReference type="EMBL" id="AE005673">
    <property type="protein sequence ID" value="AAK22116.1"/>
    <property type="molecule type" value="Genomic_DNA"/>
</dbReference>
<dbReference type="PIR" id="H87264">
    <property type="entry name" value="H87264"/>
</dbReference>
<dbReference type="RefSeq" id="NP_418948.1">
    <property type="nucleotide sequence ID" value="NC_002696.2"/>
</dbReference>
<dbReference type="RefSeq" id="WP_010918018.1">
    <property type="nucleotide sequence ID" value="NC_002696.2"/>
</dbReference>
<dbReference type="SMR" id="Q9ABU1"/>
<dbReference type="STRING" id="190650.CC_0129"/>
<dbReference type="EnsemblBacteria" id="AAK22116">
    <property type="protein sequence ID" value="AAK22116"/>
    <property type="gene ID" value="CC_0129"/>
</dbReference>
<dbReference type="KEGG" id="ccr:CC_0129"/>
<dbReference type="PATRIC" id="fig|190650.5.peg.126"/>
<dbReference type="eggNOG" id="COG0137">
    <property type="taxonomic scope" value="Bacteria"/>
</dbReference>
<dbReference type="HOGENOM" id="CLU_032784_4_2_5"/>
<dbReference type="BioCyc" id="CAULO:CC0129-MONOMER"/>
<dbReference type="UniPathway" id="UPA00068">
    <property type="reaction ID" value="UER00113"/>
</dbReference>
<dbReference type="Proteomes" id="UP000001816">
    <property type="component" value="Chromosome"/>
</dbReference>
<dbReference type="GO" id="GO:0005737">
    <property type="term" value="C:cytoplasm"/>
    <property type="evidence" value="ECO:0007669"/>
    <property type="project" value="UniProtKB-SubCell"/>
</dbReference>
<dbReference type="GO" id="GO:0004055">
    <property type="term" value="F:argininosuccinate synthase activity"/>
    <property type="evidence" value="ECO:0007669"/>
    <property type="project" value="UniProtKB-UniRule"/>
</dbReference>
<dbReference type="GO" id="GO:0005524">
    <property type="term" value="F:ATP binding"/>
    <property type="evidence" value="ECO:0007669"/>
    <property type="project" value="UniProtKB-UniRule"/>
</dbReference>
<dbReference type="GO" id="GO:0000053">
    <property type="term" value="P:argininosuccinate metabolic process"/>
    <property type="evidence" value="ECO:0007669"/>
    <property type="project" value="TreeGrafter"/>
</dbReference>
<dbReference type="GO" id="GO:0006526">
    <property type="term" value="P:L-arginine biosynthetic process"/>
    <property type="evidence" value="ECO:0007669"/>
    <property type="project" value="UniProtKB-UniRule"/>
</dbReference>
<dbReference type="GO" id="GO:0000050">
    <property type="term" value="P:urea cycle"/>
    <property type="evidence" value="ECO:0007669"/>
    <property type="project" value="TreeGrafter"/>
</dbReference>
<dbReference type="CDD" id="cd01999">
    <property type="entry name" value="ASS"/>
    <property type="match status" value="1"/>
</dbReference>
<dbReference type="FunFam" id="3.40.50.620:FF:000019">
    <property type="entry name" value="Argininosuccinate synthase"/>
    <property type="match status" value="1"/>
</dbReference>
<dbReference type="FunFam" id="3.90.1260.10:FF:000007">
    <property type="entry name" value="Argininosuccinate synthase"/>
    <property type="match status" value="1"/>
</dbReference>
<dbReference type="Gene3D" id="3.90.1260.10">
    <property type="entry name" value="Argininosuccinate synthetase, chain A, domain 2"/>
    <property type="match status" value="1"/>
</dbReference>
<dbReference type="Gene3D" id="3.40.50.620">
    <property type="entry name" value="HUPs"/>
    <property type="match status" value="1"/>
</dbReference>
<dbReference type="Gene3D" id="1.20.5.470">
    <property type="entry name" value="Single helix bin"/>
    <property type="match status" value="1"/>
</dbReference>
<dbReference type="HAMAP" id="MF_00005">
    <property type="entry name" value="Arg_succ_synth_type1"/>
    <property type="match status" value="1"/>
</dbReference>
<dbReference type="InterPro" id="IPR048268">
    <property type="entry name" value="Arginosuc_syn_C"/>
</dbReference>
<dbReference type="InterPro" id="IPR048267">
    <property type="entry name" value="Arginosuc_syn_N"/>
</dbReference>
<dbReference type="InterPro" id="IPR001518">
    <property type="entry name" value="Arginosuc_synth"/>
</dbReference>
<dbReference type="InterPro" id="IPR018223">
    <property type="entry name" value="Arginosuc_synth_CS"/>
</dbReference>
<dbReference type="InterPro" id="IPR023434">
    <property type="entry name" value="Arginosuc_synth_type_1_subfam"/>
</dbReference>
<dbReference type="InterPro" id="IPR024074">
    <property type="entry name" value="AS_cat/multimer_dom_body"/>
</dbReference>
<dbReference type="InterPro" id="IPR014729">
    <property type="entry name" value="Rossmann-like_a/b/a_fold"/>
</dbReference>
<dbReference type="NCBIfam" id="TIGR00032">
    <property type="entry name" value="argG"/>
    <property type="match status" value="1"/>
</dbReference>
<dbReference type="NCBIfam" id="NF001770">
    <property type="entry name" value="PRK00509.1"/>
    <property type="match status" value="1"/>
</dbReference>
<dbReference type="PANTHER" id="PTHR11587">
    <property type="entry name" value="ARGININOSUCCINATE SYNTHASE"/>
    <property type="match status" value="1"/>
</dbReference>
<dbReference type="PANTHER" id="PTHR11587:SF2">
    <property type="entry name" value="ARGININOSUCCINATE SYNTHASE"/>
    <property type="match status" value="1"/>
</dbReference>
<dbReference type="Pfam" id="PF20979">
    <property type="entry name" value="Arginosuc_syn_C"/>
    <property type="match status" value="1"/>
</dbReference>
<dbReference type="Pfam" id="PF00764">
    <property type="entry name" value="Arginosuc_synth"/>
    <property type="match status" value="1"/>
</dbReference>
<dbReference type="SUPFAM" id="SSF52402">
    <property type="entry name" value="Adenine nucleotide alpha hydrolases-like"/>
    <property type="match status" value="1"/>
</dbReference>
<dbReference type="SUPFAM" id="SSF69864">
    <property type="entry name" value="Argininosuccinate synthetase, C-terminal domain"/>
    <property type="match status" value="1"/>
</dbReference>
<dbReference type="PROSITE" id="PS00564">
    <property type="entry name" value="ARGININOSUCCIN_SYN_1"/>
    <property type="match status" value="1"/>
</dbReference>
<dbReference type="PROSITE" id="PS00565">
    <property type="entry name" value="ARGININOSUCCIN_SYN_2"/>
    <property type="match status" value="1"/>
</dbReference>